<sequence>MDKTTLSVNACNLEYVREKAIVGVQAAKTSTLIFFVIILAISALLLWFQTSDNPVFNELTRYMRIKNTVNDWKSLTDSKTKLESDRGRLLAAGKDDIFEFKCVDFGAYFIAMRLDKKTYLPQAIRRGTGDAWMVKKAAKVDPSAQQFCQYLIKHKSNNVITCGNEMLNELGYSGYFMSPHWCSDFSNME</sequence>
<proteinExistence type="inferred from homology"/>
<protein>
    <recommendedName>
        <fullName>Late protein H2</fullName>
    </recommendedName>
</protein>
<keyword id="KW-1015">Disulfide bond</keyword>
<keyword id="KW-1168">Fusion of virus membrane with host membrane</keyword>
<keyword id="KW-0426">Late protein</keyword>
<keyword id="KW-0472">Membrane</keyword>
<keyword id="KW-0735">Signal-anchor</keyword>
<keyword id="KW-0812">Transmembrane</keyword>
<keyword id="KW-1133">Transmembrane helix</keyword>
<keyword id="KW-1162">Viral penetration into host cytoplasm</keyword>
<keyword id="KW-0946">Virion</keyword>
<keyword id="KW-1160">Virus entry into host cell</keyword>
<comment type="function">
    <text evidence="1">Late protein Required for virus entry into host cell and for cell-cell fusion (syncytium formation).</text>
</comment>
<comment type="subunit">
    <text evidence="1">Part of a stable entry-fusion complex (EFC) which is at least composed of proteins A16, A21, A28, G3, G9, H2, J5, and L5. Formation of the viral membrane is necessary for the assembly of the complex (By similarity).</text>
</comment>
<comment type="subcellular location">
    <subcellularLocation>
        <location evidence="3">Virion membrane</location>
        <topology evidence="3">Single-pass type III membrane protein</topology>
    </subcellularLocation>
    <text evidence="1">Component of the intracellular mature virion (IMV) outer membrane.</text>
</comment>
<comment type="PTM">
    <text evidence="1">Contains two intramolecular disulfide bonds. They are created by the viral disulfide bond formation pathway, a poxvirus-specific pathway that operates on the cytoplasmic side of the IMV membranes (By similarity).</text>
</comment>
<comment type="similarity">
    <text evidence="3">Belongs to the poxviruses H2 family.</text>
</comment>
<organismHost>
    <name type="scientific">Homo sapiens</name>
    <name type="common">Human</name>
    <dbReference type="NCBI Taxonomy" id="9606"/>
</organismHost>
<evidence type="ECO:0000250" key="1"/>
<evidence type="ECO:0000255" key="2"/>
<evidence type="ECO:0000305" key="3"/>
<name>H2_VACCA</name>
<gene>
    <name type="ordered locus">MVA092R</name>
    <name type="ordered locus">ACAM3000_MVA_092</name>
</gene>
<organism>
    <name type="scientific">Vaccinia virus (strain Ankara)</name>
    <name type="common">VACV</name>
    <dbReference type="NCBI Taxonomy" id="126794"/>
    <lineage>
        <taxon>Viruses</taxon>
        <taxon>Varidnaviria</taxon>
        <taxon>Bamfordvirae</taxon>
        <taxon>Nucleocytoviricota</taxon>
        <taxon>Pokkesviricetes</taxon>
        <taxon>Chitovirales</taxon>
        <taxon>Poxviridae</taxon>
        <taxon>Chordopoxvirinae</taxon>
        <taxon>Orthopoxvirus</taxon>
        <taxon>Vaccinia virus</taxon>
    </lineage>
</organism>
<dbReference type="EMBL" id="U94848">
    <property type="protein sequence ID" value="AAB96507.1"/>
    <property type="molecule type" value="Genomic_DNA"/>
</dbReference>
<dbReference type="EMBL" id="AY603355">
    <property type="protein sequence ID" value="AAT10490.1"/>
    <property type="molecule type" value="Genomic_DNA"/>
</dbReference>
<dbReference type="PIR" id="T37368">
    <property type="entry name" value="T37368"/>
</dbReference>
<dbReference type="SMR" id="O57205"/>
<dbReference type="DNASU" id="3707556"/>
<dbReference type="KEGG" id="vg:3707556"/>
<dbReference type="Proteomes" id="UP000159908">
    <property type="component" value="Segment"/>
</dbReference>
<dbReference type="Proteomes" id="UP000172909">
    <property type="component" value="Segment"/>
</dbReference>
<dbReference type="GO" id="GO:0016020">
    <property type="term" value="C:membrane"/>
    <property type="evidence" value="ECO:0007669"/>
    <property type="project" value="UniProtKB-KW"/>
</dbReference>
<dbReference type="GO" id="GO:0055036">
    <property type="term" value="C:virion membrane"/>
    <property type="evidence" value="ECO:0007669"/>
    <property type="project" value="UniProtKB-SubCell"/>
</dbReference>
<dbReference type="GO" id="GO:0039663">
    <property type="term" value="P:membrane fusion involved in viral entry into host cell"/>
    <property type="evidence" value="ECO:0007669"/>
    <property type="project" value="UniProtKB-KW"/>
</dbReference>
<dbReference type="GO" id="GO:0046718">
    <property type="term" value="P:symbiont entry into host cell"/>
    <property type="evidence" value="ECO:0007669"/>
    <property type="project" value="UniProtKB-KW"/>
</dbReference>
<dbReference type="InterPro" id="IPR005023">
    <property type="entry name" value="Pox_LP_H2"/>
</dbReference>
<dbReference type="Pfam" id="PF03356">
    <property type="entry name" value="Pox_LP_H2"/>
    <property type="match status" value="1"/>
</dbReference>
<reference key="1">
    <citation type="journal article" date="1998" name="Virology">
        <title>The complete genomic sequence of the modified vaccinia Ankara strain: comparison with other orthopoxviruses.</title>
        <authorList>
            <person name="Antoine G."/>
            <person name="Scheiflinger F."/>
            <person name="Dorner F."/>
            <person name="Falkner F.G."/>
        </authorList>
    </citation>
    <scope>NUCLEOTIDE SEQUENCE [LARGE SCALE GENOMIC DNA]</scope>
</reference>
<reference key="2">
    <citation type="submission" date="2004-04" db="EMBL/GenBank/DDBJ databases">
        <authorList>
            <person name="Esposito J.J."/>
            <person name="Frace M."/>
            <person name="Sammons S.A."/>
            <person name="Olsen-Rasmussen M.S."/>
            <person name="Osborne J."/>
            <person name="Khristova M."/>
            <person name="Wohlhueter R.M."/>
        </authorList>
    </citation>
    <scope>NUCLEOTIDE SEQUENCE [LARGE SCALE GENOMIC DNA]</scope>
    <source>
        <strain>Isolate Acambis 3000</strain>
    </source>
</reference>
<feature type="chain" id="PRO_0000099546" description="Late protein H2">
    <location>
        <begin position="1"/>
        <end position="189"/>
    </location>
</feature>
<feature type="topological domain" description="Intravirion" evidence="2">
    <location>
        <begin position="1"/>
        <end position="28"/>
    </location>
</feature>
<feature type="transmembrane region" description="Helical; Signal-anchor for type III membrane protein" evidence="2">
    <location>
        <begin position="29"/>
        <end position="49"/>
    </location>
</feature>
<feature type="topological domain" description="Virion surface" evidence="2">
    <location>
        <begin position="50"/>
        <end position="189"/>
    </location>
</feature>
<accession>O57205</accession>
<accession>Q80HW4</accession>